<reference evidence="11" key="1">
    <citation type="submission" date="2010-12" db="EMBL/GenBank/DDBJ databases">
        <title>Complete sequence of chromosome 2 of Asticcacaulis excentricus CB 48.</title>
        <authorList>
            <consortium name="US DOE Joint Genome Institute"/>
            <person name="Lucas S."/>
            <person name="Copeland A."/>
            <person name="Lapidus A."/>
            <person name="Cheng J.-F."/>
            <person name="Bruce D."/>
            <person name="Goodwin L."/>
            <person name="Pitluck S."/>
            <person name="Teshima H."/>
            <person name="Davenport K."/>
            <person name="Detter J.C."/>
            <person name="Han C."/>
            <person name="Tapia R."/>
            <person name="Land M."/>
            <person name="Hauser L."/>
            <person name="Jeffries C."/>
            <person name="Kyrpides N."/>
            <person name="Ivanova N."/>
            <person name="Ovchinnikova G."/>
            <person name="Brun Y.V."/>
            <person name="Woyke T."/>
        </authorList>
    </citation>
    <scope>NUCLEOTIDE SEQUENCE [LARGE SCALE GENOMIC DNA]</scope>
    <source>
        <strain>ATCC 15261 / DSM 4724 / KCTC 12464 / NCIMB 9791 / VKM B-1370 / CB 48</strain>
    </source>
</reference>
<reference key="2">
    <citation type="journal article" date="2013" name="J. Am. Chem. Soc.">
        <title>Discovery and characterization of an isopeptidase that linearizes lasso peptides.</title>
        <authorList>
            <person name="Maksimov M.O."/>
            <person name="Link A.J."/>
        </authorList>
    </citation>
    <scope>FUNCTION</scope>
    <scope>EXPRESSION IN E.COLI</scope>
    <scope>BIOPHYSICOCHEMICAL PROPERTIES</scope>
    <scope>ACTIVE SITE</scope>
    <scope>MUTAGENESIS OF SER-527</scope>
</reference>
<reference key="3">
    <citation type="journal article" date="2015" name="J. Biol. Chem.">
        <title>Elucidating the specificity determinants of the AtxE2 lasso peptide isopeptidase.</title>
        <authorList>
            <person name="Maksimov M.O."/>
            <person name="Koos J.D."/>
            <person name="Zong C."/>
            <person name="Lisko B."/>
            <person name="Link A.J."/>
        </authorList>
    </citation>
    <scope>FUNCTION</scope>
    <scope>EXPRESSION IN E.COLI</scope>
</reference>
<reference evidence="12 13" key="4">
    <citation type="journal article" date="2016" name="J. Am. Chem. Soc.">
        <title>Structure of the lasso peptide isopeptidase identifies a topology for processing threaded substrates.</title>
        <authorList>
            <person name="Chekan J.R."/>
            <person name="Koos J.D."/>
            <person name="Zong C."/>
            <person name="Maksimov M.O."/>
            <person name="Link A.J."/>
            <person name="Nair S.K."/>
        </authorList>
    </citation>
    <scope>X-RAY CRYSTALLOGRAPHY (2.20 ANGSTROMS) ALONE AND IN COMPLEX WITH ASTEXIN-3</scope>
    <scope>DISULFIDE BONDS</scope>
    <scope>MUTAGENESIS OF TRP-111; TRP-116; ASN-121; TYR-438 AND ASN-562</scope>
</reference>
<gene>
    <name evidence="5 6 7" type="primary">atxE2</name>
    <name evidence="10" type="ordered locus">Astex_2444</name>
</gene>
<dbReference type="EC" id="3.4.-.-"/>
<dbReference type="EMBL" id="CP002396">
    <property type="protein sequence ID" value="ADU14095.1"/>
    <property type="molecule type" value="Genomic_DNA"/>
</dbReference>
<dbReference type="RefSeq" id="WP_013479920.1">
    <property type="nucleotide sequence ID" value="NC_014817.1"/>
</dbReference>
<dbReference type="PDB" id="5TXC">
    <property type="method" value="X-ray"/>
    <property type="resolution" value="2.40 A"/>
    <property type="chains" value="A/B=1-695"/>
</dbReference>
<dbReference type="PDB" id="5TXE">
    <property type="method" value="X-ray"/>
    <property type="resolution" value="2.20 A"/>
    <property type="chains" value="A/B=1-695"/>
</dbReference>
<dbReference type="PDBsum" id="5TXC"/>
<dbReference type="PDBsum" id="5TXE"/>
<dbReference type="SMR" id="E8RUP5"/>
<dbReference type="STRING" id="573065.Astex_2444"/>
<dbReference type="ESTHER" id="astec-e8rup5">
    <property type="family name" value="ACPH_Peptidase_S9"/>
</dbReference>
<dbReference type="MEROPS" id="S09.035"/>
<dbReference type="KEGG" id="aex:Astex_2444"/>
<dbReference type="eggNOG" id="COG0823">
    <property type="taxonomic scope" value="Bacteria"/>
</dbReference>
<dbReference type="eggNOG" id="COG1506">
    <property type="taxonomic scope" value="Bacteria"/>
</dbReference>
<dbReference type="HOGENOM" id="CLU_391760_0_0_5"/>
<dbReference type="OrthoDB" id="100212at2"/>
<dbReference type="Proteomes" id="UP000001492">
    <property type="component" value="Chromosome 2"/>
</dbReference>
<dbReference type="GO" id="GO:0005737">
    <property type="term" value="C:cytoplasm"/>
    <property type="evidence" value="ECO:0007669"/>
    <property type="project" value="UniProtKB-SubCell"/>
</dbReference>
<dbReference type="GO" id="GO:0004252">
    <property type="term" value="F:serine-type endopeptidase activity"/>
    <property type="evidence" value="ECO:0007669"/>
    <property type="project" value="TreeGrafter"/>
</dbReference>
<dbReference type="GO" id="GO:0006508">
    <property type="term" value="P:proteolysis"/>
    <property type="evidence" value="ECO:0007669"/>
    <property type="project" value="InterPro"/>
</dbReference>
<dbReference type="Gene3D" id="3.40.50.1820">
    <property type="entry name" value="alpha/beta hydrolase"/>
    <property type="match status" value="1"/>
</dbReference>
<dbReference type="Gene3D" id="2.120.10.30">
    <property type="entry name" value="TolB, C-terminal domain"/>
    <property type="match status" value="1"/>
</dbReference>
<dbReference type="InterPro" id="IPR011042">
    <property type="entry name" value="6-blade_b-propeller_TolB-like"/>
</dbReference>
<dbReference type="InterPro" id="IPR029058">
    <property type="entry name" value="AB_hydrolase_fold"/>
</dbReference>
<dbReference type="InterPro" id="IPR053536">
    <property type="entry name" value="Lasso_peptide_isopeptidase"/>
</dbReference>
<dbReference type="InterPro" id="IPR001375">
    <property type="entry name" value="Peptidase_S9_cat"/>
</dbReference>
<dbReference type="NCBIfam" id="NF033523">
    <property type="entry name" value="lasso_peptidase"/>
    <property type="match status" value="1"/>
</dbReference>
<dbReference type="PANTHER" id="PTHR42776:SF13">
    <property type="entry name" value="DIPEPTIDYL-PEPTIDASE 5"/>
    <property type="match status" value="1"/>
</dbReference>
<dbReference type="PANTHER" id="PTHR42776">
    <property type="entry name" value="SERINE PEPTIDASE S9 FAMILY MEMBER"/>
    <property type="match status" value="1"/>
</dbReference>
<dbReference type="Pfam" id="PF00326">
    <property type="entry name" value="Peptidase_S9"/>
    <property type="match status" value="1"/>
</dbReference>
<dbReference type="SUPFAM" id="SSF53474">
    <property type="entry name" value="alpha/beta-Hydrolases"/>
    <property type="match status" value="1"/>
</dbReference>
<dbReference type="SUPFAM" id="SSF82171">
    <property type="entry name" value="DPP6 N-terminal domain-like"/>
    <property type="match status" value="1"/>
</dbReference>
<keyword id="KW-0002">3D-structure</keyword>
<keyword id="KW-0963">Cytoplasm</keyword>
<keyword id="KW-1015">Disulfide bond</keyword>
<keyword id="KW-0378">Hydrolase</keyword>
<keyword id="KW-1185">Reference proteome</keyword>
<keyword id="KW-0732">Signal</keyword>
<name>ATXE2_ASTEC</name>
<feature type="signal peptide" evidence="1">
    <location>
        <begin position="1"/>
        <end position="30"/>
    </location>
</feature>
<feature type="chain" id="PRO_5003230865" description="Lasso peptide isopeptidase AtxE2">
    <location>
        <begin position="31"/>
        <end position="695"/>
    </location>
</feature>
<feature type="active site" description="Nucleophile" evidence="2">
    <location>
        <position position="527"/>
    </location>
</feature>
<feature type="active site" description="Charge relay system" evidence="9">
    <location>
        <position position="610"/>
    </location>
</feature>
<feature type="active site" description="Charge relay system" evidence="9">
    <location>
        <position position="638"/>
    </location>
</feature>
<feature type="site" description="Important for activity. Binds to Astexin-3" evidence="4">
    <location>
        <position position="116"/>
    </location>
</feature>
<feature type="site" description="Catalytically important residue that stabilizes the alkoxide intermediate. Moves to point toward the isopeptide bond" evidence="4">
    <location>
        <position position="438"/>
    </location>
</feature>
<feature type="site" description="Important for activity. Binds to Astexin-3" evidence="4">
    <location>
        <position position="562"/>
    </location>
</feature>
<feature type="disulfide bond" evidence="12 13">
    <location>
        <begin position="296"/>
        <end position="301"/>
    </location>
</feature>
<feature type="disulfide bond" evidence="12 13">
    <location>
        <begin position="354"/>
        <end position="363"/>
    </location>
</feature>
<feature type="disulfide bond" evidence="12 13">
    <location>
        <begin position="551"/>
        <end position="552"/>
    </location>
</feature>
<feature type="mutagenesis site" description="No change in activity." evidence="4">
    <original>W</original>
    <variation>A</variation>
    <location>
        <position position="111"/>
    </location>
</feature>
<feature type="mutagenesis site" description="Decrease in activity." evidence="4">
    <original>W</original>
    <variation>A</variation>
    <location>
        <position position="116"/>
    </location>
</feature>
<feature type="mutagenesis site" description="Increase in activity." evidence="4">
    <original>N</original>
    <variation>A</variation>
    <location>
        <position position="121"/>
    </location>
</feature>
<feature type="mutagenesis site" description="Loss of activity." evidence="4">
    <original>Y</original>
    <variation>F</variation>
    <location>
        <position position="438"/>
    </location>
</feature>
<feature type="mutagenesis site" description="Loss of activity." evidence="2">
    <original>S</original>
    <variation>A</variation>
    <location>
        <position position="527"/>
    </location>
</feature>
<feature type="mutagenesis site" description="Decrease in activity." evidence="4">
    <original>N</original>
    <variation>A</variation>
    <location>
        <position position="562"/>
    </location>
</feature>
<feature type="helix" evidence="14">
    <location>
        <begin position="40"/>
        <end position="44"/>
    </location>
</feature>
<feature type="strand" evidence="14">
    <location>
        <begin position="48"/>
        <end position="53"/>
    </location>
</feature>
<feature type="strand" evidence="14">
    <location>
        <begin position="61"/>
        <end position="63"/>
    </location>
</feature>
<feature type="strand" evidence="14">
    <location>
        <begin position="67"/>
        <end position="78"/>
    </location>
</feature>
<feature type="turn" evidence="14">
    <location>
        <begin position="79"/>
        <end position="82"/>
    </location>
</feature>
<feature type="strand" evidence="14">
    <location>
        <begin position="83"/>
        <end position="92"/>
    </location>
</feature>
<feature type="strand" evidence="14">
    <location>
        <begin position="100"/>
        <end position="104"/>
    </location>
</feature>
<feature type="strand" evidence="14">
    <location>
        <begin position="118"/>
        <end position="120"/>
    </location>
</feature>
<feature type="strand" evidence="14">
    <location>
        <begin position="138"/>
        <end position="147"/>
    </location>
</feature>
<feature type="strand" evidence="14">
    <location>
        <begin position="150"/>
        <end position="157"/>
    </location>
</feature>
<feature type="strand" evidence="14">
    <location>
        <begin position="163"/>
        <end position="167"/>
    </location>
</feature>
<feature type="strand" evidence="14">
    <location>
        <begin position="173"/>
        <end position="180"/>
    </location>
</feature>
<feature type="strand" evidence="14">
    <location>
        <begin position="183"/>
        <end position="188"/>
    </location>
</feature>
<feature type="helix" evidence="14">
    <location>
        <begin position="190"/>
        <end position="202"/>
    </location>
</feature>
<feature type="helix" evidence="14">
    <location>
        <begin position="203"/>
        <end position="205"/>
    </location>
</feature>
<feature type="turn" evidence="14">
    <location>
        <begin position="215"/>
        <end position="217"/>
    </location>
</feature>
<feature type="strand" evidence="14">
    <location>
        <begin position="218"/>
        <end position="220"/>
    </location>
</feature>
<feature type="strand" evidence="14">
    <location>
        <begin position="230"/>
        <end position="235"/>
    </location>
</feature>
<feature type="turn" evidence="14">
    <location>
        <begin position="236"/>
        <end position="238"/>
    </location>
</feature>
<feature type="strand" evidence="14">
    <location>
        <begin position="241"/>
        <end position="243"/>
    </location>
</feature>
<feature type="helix" evidence="14">
    <location>
        <begin position="246"/>
        <end position="253"/>
    </location>
</feature>
<feature type="strand" evidence="14">
    <location>
        <begin position="261"/>
        <end position="263"/>
    </location>
</feature>
<feature type="strand" evidence="14">
    <location>
        <begin position="266"/>
        <end position="271"/>
    </location>
</feature>
<feature type="strand" evidence="14">
    <location>
        <begin position="283"/>
        <end position="288"/>
    </location>
</feature>
<feature type="helix" evidence="14">
    <location>
        <begin position="299"/>
        <end position="301"/>
    </location>
</feature>
<feature type="strand" evidence="14">
    <location>
        <begin position="302"/>
        <end position="310"/>
    </location>
</feature>
<feature type="turn" evidence="14">
    <location>
        <begin position="311"/>
        <end position="314"/>
    </location>
</feature>
<feature type="strand" evidence="14">
    <location>
        <begin position="315"/>
        <end position="323"/>
    </location>
</feature>
<feature type="helix" evidence="14">
    <location>
        <begin position="324"/>
        <end position="326"/>
    </location>
</feature>
<feature type="strand" evidence="14">
    <location>
        <begin position="328"/>
        <end position="335"/>
    </location>
</feature>
<feature type="strand" evidence="14">
    <location>
        <begin position="342"/>
        <end position="357"/>
    </location>
</feature>
<feature type="strand" evidence="14">
    <location>
        <begin position="360"/>
        <end position="367"/>
    </location>
</feature>
<feature type="strand" evidence="14">
    <location>
        <begin position="370"/>
        <end position="378"/>
    </location>
</feature>
<feature type="turn" evidence="14">
    <location>
        <begin position="379"/>
        <end position="381"/>
    </location>
</feature>
<feature type="strand" evidence="14">
    <location>
        <begin position="384"/>
        <end position="388"/>
    </location>
</feature>
<feature type="helix" evidence="14">
    <location>
        <begin position="394"/>
        <end position="396"/>
    </location>
</feature>
<feature type="strand" evidence="14">
    <location>
        <begin position="401"/>
        <end position="408"/>
    </location>
</feature>
<feature type="strand" evidence="14">
    <location>
        <begin position="414"/>
        <end position="421"/>
    </location>
</feature>
<feature type="strand" evidence="14">
    <location>
        <begin position="431"/>
        <end position="436"/>
    </location>
</feature>
<feature type="turn" evidence="14">
    <location>
        <begin position="447"/>
        <end position="450"/>
    </location>
</feature>
<feature type="helix" evidence="14">
    <location>
        <begin position="454"/>
        <end position="459"/>
    </location>
</feature>
<feature type="strand" evidence="14">
    <location>
        <begin position="463"/>
        <end position="467"/>
    </location>
</feature>
<feature type="helix" evidence="14">
    <location>
        <begin position="473"/>
        <end position="476"/>
    </location>
</feature>
<feature type="helix" evidence="14">
    <location>
        <begin position="482"/>
        <end position="490"/>
    </location>
</feature>
<feature type="helix" evidence="14">
    <location>
        <begin position="491"/>
        <end position="493"/>
    </location>
</feature>
<feature type="helix" evidence="14">
    <location>
        <begin position="494"/>
        <end position="512"/>
    </location>
</feature>
<feature type="strand" evidence="14">
    <location>
        <begin position="516"/>
        <end position="526"/>
    </location>
</feature>
<feature type="helix" evidence="14">
    <location>
        <begin position="528"/>
        <end position="539"/>
    </location>
</feature>
<feature type="strand" evidence="14">
    <location>
        <begin position="544"/>
        <end position="550"/>
    </location>
</feature>
<feature type="helix" evidence="14">
    <location>
        <begin position="555"/>
        <end position="558"/>
    </location>
</feature>
<feature type="turn" evidence="14">
    <location>
        <begin position="559"/>
        <end position="562"/>
    </location>
</feature>
<feature type="helix" evidence="14">
    <location>
        <begin position="563"/>
        <end position="570"/>
    </location>
</feature>
<feature type="helix" evidence="14">
    <location>
        <begin position="571"/>
        <end position="573"/>
    </location>
</feature>
<feature type="helix" evidence="14">
    <location>
        <begin position="586"/>
        <end position="588"/>
    </location>
</feature>
<feature type="helix" evidence="14">
    <location>
        <begin position="591"/>
        <end position="594"/>
    </location>
</feature>
<feature type="helix" evidence="14">
    <location>
        <begin position="595"/>
        <end position="597"/>
    </location>
</feature>
<feature type="strand" evidence="14">
    <location>
        <begin position="602"/>
        <end position="607"/>
    </location>
</feature>
<feature type="helix" evidence="14">
    <location>
        <begin position="608"/>
        <end position="611"/>
    </location>
</feature>
<feature type="helix" evidence="14">
    <location>
        <begin position="612"/>
        <end position="614"/>
    </location>
</feature>
<feature type="helix" evidence="14">
    <location>
        <begin position="615"/>
        <end position="623"/>
    </location>
</feature>
<feature type="strand" evidence="14">
    <location>
        <begin position="628"/>
        <end position="633"/>
    </location>
</feature>
<feature type="helix" evidence="14">
    <location>
        <begin position="643"/>
        <end position="662"/>
    </location>
</feature>
<feature type="helix" evidence="14">
    <location>
        <begin position="669"/>
        <end position="671"/>
    </location>
</feature>
<feature type="helix" evidence="14">
    <location>
        <begin position="672"/>
        <end position="684"/>
    </location>
</feature>
<organism>
    <name type="scientific">Asticcacaulis excentricus (strain ATCC 15261 / DSM 4724 / KCTC 12464 / NCIMB 9791 / VKM B-1370 / CB 48)</name>
    <dbReference type="NCBI Taxonomy" id="573065"/>
    <lineage>
        <taxon>Bacteria</taxon>
        <taxon>Pseudomonadati</taxon>
        <taxon>Pseudomonadota</taxon>
        <taxon>Alphaproteobacteria</taxon>
        <taxon>Caulobacterales</taxon>
        <taxon>Caulobacteraceae</taxon>
        <taxon>Asticcacaulis</taxon>
    </lineage>
</organism>
<accession>E8RUP5</accession>
<protein>
    <recommendedName>
        <fullName evidence="5 6 7">Lasso peptide isopeptidase AtxE2</fullName>
        <ecNumber>3.4.-.-</ecNumber>
    </recommendedName>
    <alternativeName>
        <fullName evidence="5">Isopeptide hydrolase AtxE2</fullName>
    </alternativeName>
</protein>
<sequence length="695" mass="77392">MRSSKIRCPGAIRVGTLVTAFGCLPHVAFAAAREAPPVTPEVLVRLADIGTMSASETTPLLSLSPDGRYVAFQVRQADPVTNLNVFRMVVKATDGATDAIDVDVGGEYLFWTIPSWGYARNAPSGANLTIQPRWSPSGTHLAYLRQDQGRVRVWRASVKGEGASPVIEDAYDIEDVQWLDDNTLIYSGRPGFVEAEAEIEREGRRGWVYDERFHPLTGARPRVLEPISIVYQVLDLKTGTRRAATPTEVARLREKPDPLRAMVGRTTFSVSRTDPQNINAPTTLVARRGEGEPVRCDEEACQNITRMWGDETANVLYFLRREGWASNEMALYRMPADALKPVRIWHATGLLQGCERQAKRLICAQESALQPRRLVTLNLTSGQMSPLYDPNPDLSRYRLPKVERLTLRNRNGIEVFSDLVLPPDYQLGTRLPLVIVQYSSRGFLRGGTGDENPILPLATAGFAVLSFHSPRSEASYQRFTSPIAQSKAEYSNWRNRWNILHTLEDLIDDLDRRGVIDPARVGLTGLSDGATTVHFGLINSHRFAAAVTSSCCTDSFTASVMNGPRISGALKAYGIETDQADDGPFWAATSFVVNASRLDTPLLIQSADEEYLGALPGFTALQQARKPVELIIYPNEHHVKWQPAHRLAVYNRTIDWFRFWLMDQSDPAPDKAAQYDRWRALRALRQKSPSPTPAP</sequence>
<comment type="function">
    <text evidence="2 3 4">Lasso peptide isopeptidase that specifically hydrolyzes Astexin-2 and Astexin-3, converting them to linear peptides (PubMed:23862624). Has only a few specific contacts with substrates, because it recognizes Astexin knotted structure (principally the loop structure) (PubMed:26534965, PubMed:27998080). Its binding to lasso peptides opens them to expose the isopeptide bonds for hydrolysis (PubMed:27998080).</text>
</comment>
<comment type="biophysicochemical properties">
    <kinetics>
        <KM evidence="2">131 uM for Astexin-3</KM>
    </kinetics>
</comment>
<comment type="subcellular location">
    <subcellularLocation>
        <location evidence="8">Cytoplasm</location>
    </subcellularLocation>
</comment>
<evidence type="ECO:0000255" key="1"/>
<evidence type="ECO:0000269" key="2">
    <source>
    </source>
</evidence>
<evidence type="ECO:0000269" key="3">
    <source>
    </source>
</evidence>
<evidence type="ECO:0000269" key="4">
    <source>
    </source>
</evidence>
<evidence type="ECO:0000303" key="5">
    <source>
    </source>
</evidence>
<evidence type="ECO:0000303" key="6">
    <source>
    </source>
</evidence>
<evidence type="ECO:0000303" key="7">
    <source>
    </source>
</evidence>
<evidence type="ECO:0000305" key="8">
    <source>
    </source>
</evidence>
<evidence type="ECO:0000305" key="9">
    <source>
    </source>
</evidence>
<evidence type="ECO:0000312" key="10">
    <source>
        <dbReference type="EMBL" id="ADU14095.1"/>
    </source>
</evidence>
<evidence type="ECO:0000312" key="11">
    <source>
        <dbReference type="Proteomes" id="UP000001492"/>
    </source>
</evidence>
<evidence type="ECO:0007744" key="12">
    <source>
        <dbReference type="PDB" id="5TXC"/>
    </source>
</evidence>
<evidence type="ECO:0007744" key="13">
    <source>
        <dbReference type="PDB" id="5TXE"/>
    </source>
</evidence>
<evidence type="ECO:0007829" key="14">
    <source>
        <dbReference type="PDB" id="5TXE"/>
    </source>
</evidence>
<proteinExistence type="evidence at protein level"/>